<dbReference type="EC" id="2.7.2.11" evidence="1"/>
<dbReference type="EMBL" id="CP000010">
    <property type="protein sequence ID" value="AAU50094.1"/>
    <property type="molecule type" value="Genomic_DNA"/>
</dbReference>
<dbReference type="RefSeq" id="WP_004194262.1">
    <property type="nucleotide sequence ID" value="NC_006348.1"/>
</dbReference>
<dbReference type="RefSeq" id="YP_104066.1">
    <property type="nucleotide sequence ID" value="NC_006348.1"/>
</dbReference>
<dbReference type="SMR" id="Q62GV5"/>
<dbReference type="GeneID" id="93061602"/>
<dbReference type="KEGG" id="bma:BMA2520"/>
<dbReference type="PATRIC" id="fig|243160.12.peg.2600"/>
<dbReference type="eggNOG" id="COG0263">
    <property type="taxonomic scope" value="Bacteria"/>
</dbReference>
<dbReference type="HOGENOM" id="CLU_025400_2_0_4"/>
<dbReference type="UniPathway" id="UPA00098">
    <property type="reaction ID" value="UER00359"/>
</dbReference>
<dbReference type="Proteomes" id="UP000006693">
    <property type="component" value="Chromosome 1"/>
</dbReference>
<dbReference type="GO" id="GO:0005829">
    <property type="term" value="C:cytosol"/>
    <property type="evidence" value="ECO:0007669"/>
    <property type="project" value="TreeGrafter"/>
</dbReference>
<dbReference type="GO" id="GO:0005524">
    <property type="term" value="F:ATP binding"/>
    <property type="evidence" value="ECO:0007669"/>
    <property type="project" value="UniProtKB-KW"/>
</dbReference>
<dbReference type="GO" id="GO:0004349">
    <property type="term" value="F:glutamate 5-kinase activity"/>
    <property type="evidence" value="ECO:0007669"/>
    <property type="project" value="UniProtKB-UniRule"/>
</dbReference>
<dbReference type="GO" id="GO:0003723">
    <property type="term" value="F:RNA binding"/>
    <property type="evidence" value="ECO:0007669"/>
    <property type="project" value="InterPro"/>
</dbReference>
<dbReference type="GO" id="GO:0055129">
    <property type="term" value="P:L-proline biosynthetic process"/>
    <property type="evidence" value="ECO:0007669"/>
    <property type="project" value="UniProtKB-UniRule"/>
</dbReference>
<dbReference type="CDD" id="cd04242">
    <property type="entry name" value="AAK_G5K_ProB"/>
    <property type="match status" value="1"/>
</dbReference>
<dbReference type="CDD" id="cd21157">
    <property type="entry name" value="PUA_G5K"/>
    <property type="match status" value="1"/>
</dbReference>
<dbReference type="FunFam" id="2.30.130.10:FF:000007">
    <property type="entry name" value="Glutamate 5-kinase"/>
    <property type="match status" value="1"/>
</dbReference>
<dbReference type="FunFam" id="3.40.1160.10:FF:000018">
    <property type="entry name" value="Glutamate 5-kinase"/>
    <property type="match status" value="1"/>
</dbReference>
<dbReference type="Gene3D" id="3.40.1160.10">
    <property type="entry name" value="Acetylglutamate kinase-like"/>
    <property type="match status" value="1"/>
</dbReference>
<dbReference type="Gene3D" id="2.30.130.10">
    <property type="entry name" value="PUA domain"/>
    <property type="match status" value="1"/>
</dbReference>
<dbReference type="HAMAP" id="MF_00456">
    <property type="entry name" value="ProB"/>
    <property type="match status" value="1"/>
</dbReference>
<dbReference type="InterPro" id="IPR036393">
    <property type="entry name" value="AceGlu_kinase-like_sf"/>
</dbReference>
<dbReference type="InterPro" id="IPR001048">
    <property type="entry name" value="Asp/Glu/Uridylate_kinase"/>
</dbReference>
<dbReference type="InterPro" id="IPR041739">
    <property type="entry name" value="G5K_ProB"/>
</dbReference>
<dbReference type="InterPro" id="IPR001057">
    <property type="entry name" value="Glu/AcGlu_kinase"/>
</dbReference>
<dbReference type="InterPro" id="IPR011529">
    <property type="entry name" value="Glu_5kinase"/>
</dbReference>
<dbReference type="InterPro" id="IPR005715">
    <property type="entry name" value="Glu_5kinase/COase_Synthase"/>
</dbReference>
<dbReference type="InterPro" id="IPR019797">
    <property type="entry name" value="Glutamate_5-kinase_CS"/>
</dbReference>
<dbReference type="InterPro" id="IPR002478">
    <property type="entry name" value="PUA"/>
</dbReference>
<dbReference type="InterPro" id="IPR015947">
    <property type="entry name" value="PUA-like_sf"/>
</dbReference>
<dbReference type="InterPro" id="IPR036974">
    <property type="entry name" value="PUA_sf"/>
</dbReference>
<dbReference type="NCBIfam" id="TIGR01027">
    <property type="entry name" value="proB"/>
    <property type="match status" value="1"/>
</dbReference>
<dbReference type="PANTHER" id="PTHR43654">
    <property type="entry name" value="GLUTAMATE 5-KINASE"/>
    <property type="match status" value="1"/>
</dbReference>
<dbReference type="PANTHER" id="PTHR43654:SF1">
    <property type="entry name" value="ISOPENTENYL PHOSPHATE KINASE"/>
    <property type="match status" value="1"/>
</dbReference>
<dbReference type="Pfam" id="PF00696">
    <property type="entry name" value="AA_kinase"/>
    <property type="match status" value="1"/>
</dbReference>
<dbReference type="Pfam" id="PF01472">
    <property type="entry name" value="PUA"/>
    <property type="match status" value="1"/>
</dbReference>
<dbReference type="PIRSF" id="PIRSF000729">
    <property type="entry name" value="GK"/>
    <property type="match status" value="1"/>
</dbReference>
<dbReference type="PRINTS" id="PR00474">
    <property type="entry name" value="GLU5KINASE"/>
</dbReference>
<dbReference type="SMART" id="SM00359">
    <property type="entry name" value="PUA"/>
    <property type="match status" value="1"/>
</dbReference>
<dbReference type="SUPFAM" id="SSF53633">
    <property type="entry name" value="Carbamate kinase-like"/>
    <property type="match status" value="1"/>
</dbReference>
<dbReference type="SUPFAM" id="SSF88697">
    <property type="entry name" value="PUA domain-like"/>
    <property type="match status" value="1"/>
</dbReference>
<dbReference type="PROSITE" id="PS00902">
    <property type="entry name" value="GLUTAMATE_5_KINASE"/>
    <property type="match status" value="1"/>
</dbReference>
<dbReference type="PROSITE" id="PS50890">
    <property type="entry name" value="PUA"/>
    <property type="match status" value="1"/>
</dbReference>
<gene>
    <name evidence="1" type="primary">proB</name>
    <name type="ordered locus">BMA2520</name>
</gene>
<accession>Q62GV5</accession>
<feature type="chain" id="PRO_0000109654" description="Glutamate 5-kinase">
    <location>
        <begin position="1"/>
        <end position="372"/>
    </location>
</feature>
<feature type="domain" description="PUA" evidence="1">
    <location>
        <begin position="280"/>
        <end position="358"/>
    </location>
</feature>
<feature type="binding site" evidence="1">
    <location>
        <position position="14"/>
    </location>
    <ligand>
        <name>ATP</name>
        <dbReference type="ChEBI" id="CHEBI:30616"/>
    </ligand>
</feature>
<feature type="binding site" evidence="1">
    <location>
        <position position="54"/>
    </location>
    <ligand>
        <name>substrate</name>
    </ligand>
</feature>
<feature type="binding site" evidence="1">
    <location>
        <position position="141"/>
    </location>
    <ligand>
        <name>substrate</name>
    </ligand>
</feature>
<feature type="binding site" evidence="1">
    <location>
        <position position="153"/>
    </location>
    <ligand>
        <name>substrate</name>
    </ligand>
</feature>
<feature type="binding site" evidence="1">
    <location>
        <begin position="173"/>
        <end position="174"/>
    </location>
    <ligand>
        <name>ATP</name>
        <dbReference type="ChEBI" id="CHEBI:30616"/>
    </ligand>
</feature>
<comment type="function">
    <text evidence="1">Catalyzes the transfer of a phosphate group to glutamate to form L-glutamate 5-phosphate.</text>
</comment>
<comment type="catalytic activity">
    <reaction evidence="1">
        <text>L-glutamate + ATP = L-glutamyl 5-phosphate + ADP</text>
        <dbReference type="Rhea" id="RHEA:14877"/>
        <dbReference type="ChEBI" id="CHEBI:29985"/>
        <dbReference type="ChEBI" id="CHEBI:30616"/>
        <dbReference type="ChEBI" id="CHEBI:58274"/>
        <dbReference type="ChEBI" id="CHEBI:456216"/>
        <dbReference type="EC" id="2.7.2.11"/>
    </reaction>
</comment>
<comment type="pathway">
    <text evidence="1">Amino-acid biosynthesis; L-proline biosynthesis; L-glutamate 5-semialdehyde from L-glutamate: step 1/2.</text>
</comment>
<comment type="subcellular location">
    <subcellularLocation>
        <location evidence="1">Cytoplasm</location>
    </subcellularLocation>
</comment>
<comment type="similarity">
    <text evidence="1">Belongs to the glutamate 5-kinase family.</text>
</comment>
<proteinExistence type="inferred from homology"/>
<sequence>MRSIIADSKRLVVKVGSSLVTNDGRGLDHDAIGRWAAQIAALRGAGKEVVLVSSGAIAEGMQRLGWSKRPREIDELQAAAAVGQMGLAQVYESRFAEHGIRTAQILLTHADLADRERYLNARSTLLTLLRLGVVPIINENDTVVTDEIKFGDNDTLGALVANLIEGDTLVILTDQPGLFTADPRKDPGATLVAEASAGAPELEAMAGGAGSSIGRGGMLTKILAAKRAAHSGANTVIASGRERDVLVRLAAGEAIGTQLIARTARMAARKQWMADHLQVRGHVVIDAGAVDKLTAGGKSLLPIGVVAVQGVFARGEVIACVDDTGREVARGITNYSSAETKLIQRKPSGEIETVLGYMLEPELIHRDNLVLV</sequence>
<name>PROB_BURMA</name>
<reference key="1">
    <citation type="journal article" date="2004" name="Proc. Natl. Acad. Sci. U.S.A.">
        <title>Structural flexibility in the Burkholderia mallei genome.</title>
        <authorList>
            <person name="Nierman W.C."/>
            <person name="DeShazer D."/>
            <person name="Kim H.S."/>
            <person name="Tettelin H."/>
            <person name="Nelson K.E."/>
            <person name="Feldblyum T.V."/>
            <person name="Ulrich R.L."/>
            <person name="Ronning C.M."/>
            <person name="Brinkac L.M."/>
            <person name="Daugherty S.C."/>
            <person name="Davidsen T.D."/>
            <person name="DeBoy R.T."/>
            <person name="Dimitrov G."/>
            <person name="Dodson R.J."/>
            <person name="Durkin A.S."/>
            <person name="Gwinn M.L."/>
            <person name="Haft D.H."/>
            <person name="Khouri H.M."/>
            <person name="Kolonay J.F."/>
            <person name="Madupu R."/>
            <person name="Mohammoud Y."/>
            <person name="Nelson W.C."/>
            <person name="Radune D."/>
            <person name="Romero C.M."/>
            <person name="Sarria S."/>
            <person name="Selengut J."/>
            <person name="Shamblin C."/>
            <person name="Sullivan S.A."/>
            <person name="White O."/>
            <person name="Yu Y."/>
            <person name="Zafar N."/>
            <person name="Zhou L."/>
            <person name="Fraser C.M."/>
        </authorList>
    </citation>
    <scope>NUCLEOTIDE SEQUENCE [LARGE SCALE GENOMIC DNA]</scope>
    <source>
        <strain>ATCC 23344</strain>
    </source>
</reference>
<protein>
    <recommendedName>
        <fullName evidence="1">Glutamate 5-kinase</fullName>
        <ecNumber evidence="1">2.7.2.11</ecNumber>
    </recommendedName>
    <alternativeName>
        <fullName evidence="1">Gamma-glutamyl kinase</fullName>
        <shortName evidence="1">GK</shortName>
    </alternativeName>
</protein>
<keyword id="KW-0028">Amino-acid biosynthesis</keyword>
<keyword id="KW-0067">ATP-binding</keyword>
<keyword id="KW-0963">Cytoplasm</keyword>
<keyword id="KW-0418">Kinase</keyword>
<keyword id="KW-0547">Nucleotide-binding</keyword>
<keyword id="KW-0641">Proline biosynthesis</keyword>
<keyword id="KW-1185">Reference proteome</keyword>
<keyword id="KW-0808">Transferase</keyword>
<organism>
    <name type="scientific">Burkholderia mallei (strain ATCC 23344)</name>
    <dbReference type="NCBI Taxonomy" id="243160"/>
    <lineage>
        <taxon>Bacteria</taxon>
        <taxon>Pseudomonadati</taxon>
        <taxon>Pseudomonadota</taxon>
        <taxon>Betaproteobacteria</taxon>
        <taxon>Burkholderiales</taxon>
        <taxon>Burkholderiaceae</taxon>
        <taxon>Burkholderia</taxon>
        <taxon>pseudomallei group</taxon>
    </lineage>
</organism>
<evidence type="ECO:0000255" key="1">
    <source>
        <dbReference type="HAMAP-Rule" id="MF_00456"/>
    </source>
</evidence>